<reference key="1">
    <citation type="submission" date="2007-06" db="EMBL/GenBank/DDBJ databases">
        <authorList>
            <person name="Dodson R.J."/>
            <person name="Harkins D."/>
            <person name="Paulsen I.T."/>
        </authorList>
    </citation>
    <scope>NUCLEOTIDE SEQUENCE [LARGE SCALE GENOMIC DNA]</scope>
    <source>
        <strain>DSM 24068 / PA7</strain>
    </source>
</reference>
<organism>
    <name type="scientific">Pseudomonas paraeruginosa (strain DSM 24068 / PA7)</name>
    <name type="common">Pseudomonas aeruginosa (strain PA7)</name>
    <dbReference type="NCBI Taxonomy" id="381754"/>
    <lineage>
        <taxon>Bacteria</taxon>
        <taxon>Pseudomonadati</taxon>
        <taxon>Pseudomonadota</taxon>
        <taxon>Gammaproteobacteria</taxon>
        <taxon>Pseudomonadales</taxon>
        <taxon>Pseudomonadaceae</taxon>
        <taxon>Pseudomonas</taxon>
        <taxon>Pseudomonas paraeruginosa</taxon>
    </lineage>
</organism>
<feature type="chain" id="PRO_1000087699" description="Ribosomal RNA large subunit methyltransferase E">
    <location>
        <begin position="1"/>
        <end position="207"/>
    </location>
</feature>
<feature type="active site" description="Proton acceptor" evidence="1">
    <location>
        <position position="161"/>
    </location>
</feature>
<feature type="binding site" evidence="1">
    <location>
        <position position="60"/>
    </location>
    <ligand>
        <name>S-adenosyl-L-methionine</name>
        <dbReference type="ChEBI" id="CHEBI:59789"/>
    </ligand>
</feature>
<feature type="binding site" evidence="1">
    <location>
        <position position="62"/>
    </location>
    <ligand>
        <name>S-adenosyl-L-methionine</name>
        <dbReference type="ChEBI" id="CHEBI:59789"/>
    </ligand>
</feature>
<feature type="binding site" evidence="1">
    <location>
        <position position="80"/>
    </location>
    <ligand>
        <name>S-adenosyl-L-methionine</name>
        <dbReference type="ChEBI" id="CHEBI:59789"/>
    </ligand>
</feature>
<feature type="binding site" evidence="1">
    <location>
        <position position="96"/>
    </location>
    <ligand>
        <name>S-adenosyl-L-methionine</name>
        <dbReference type="ChEBI" id="CHEBI:59789"/>
    </ligand>
</feature>
<feature type="binding site" evidence="1">
    <location>
        <position position="121"/>
    </location>
    <ligand>
        <name>S-adenosyl-L-methionine</name>
        <dbReference type="ChEBI" id="CHEBI:59789"/>
    </ligand>
</feature>
<sequence length="207" mass="23513">MARSKTSQRWLKEHFDDPYVKMAQRDGYRSRASYKLLEIQEKDRILRPGMTVVDLGAAPGGWSQVTSRVIGDRGRLIASDILEMDSIPDVTFIQGDFTEDAVFARILEAIGEHPVDLVISDMAPNMSGVRAADQPRAMYLCELALDLAGRVLRPGGDFLIKIFQGEGFDQYHKQAREMFDKVQMRKPLSSRDRSREQYLLARGFRGE</sequence>
<proteinExistence type="inferred from homology"/>
<gene>
    <name evidence="1" type="primary">rlmE</name>
    <name evidence="1" type="synonym">ftsJ</name>
    <name evidence="1" type="synonym">rrmJ</name>
    <name type="ordered locus">PSPA7_5472</name>
</gene>
<comment type="function">
    <text evidence="1">Specifically methylates the uridine in position 2552 of 23S rRNA at the 2'-O position of the ribose in the fully assembled 50S ribosomal subunit.</text>
</comment>
<comment type="catalytic activity">
    <reaction evidence="1">
        <text>uridine(2552) in 23S rRNA + S-adenosyl-L-methionine = 2'-O-methyluridine(2552) in 23S rRNA + S-adenosyl-L-homocysteine + H(+)</text>
        <dbReference type="Rhea" id="RHEA:42720"/>
        <dbReference type="Rhea" id="RHEA-COMP:10202"/>
        <dbReference type="Rhea" id="RHEA-COMP:10203"/>
        <dbReference type="ChEBI" id="CHEBI:15378"/>
        <dbReference type="ChEBI" id="CHEBI:57856"/>
        <dbReference type="ChEBI" id="CHEBI:59789"/>
        <dbReference type="ChEBI" id="CHEBI:65315"/>
        <dbReference type="ChEBI" id="CHEBI:74478"/>
        <dbReference type="EC" id="2.1.1.166"/>
    </reaction>
</comment>
<comment type="subcellular location">
    <subcellularLocation>
        <location evidence="1">Cytoplasm</location>
    </subcellularLocation>
</comment>
<comment type="similarity">
    <text evidence="1">Belongs to the class I-like SAM-binding methyltransferase superfamily. RNA methyltransferase RlmE family.</text>
</comment>
<name>RLME_PSEP7</name>
<evidence type="ECO:0000255" key="1">
    <source>
        <dbReference type="HAMAP-Rule" id="MF_01547"/>
    </source>
</evidence>
<accession>A6VCK9</accession>
<keyword id="KW-0963">Cytoplasm</keyword>
<keyword id="KW-0489">Methyltransferase</keyword>
<keyword id="KW-0698">rRNA processing</keyword>
<keyword id="KW-0949">S-adenosyl-L-methionine</keyword>
<keyword id="KW-0808">Transferase</keyword>
<dbReference type="EC" id="2.1.1.166" evidence="1"/>
<dbReference type="EMBL" id="CP000744">
    <property type="protein sequence ID" value="ABR83172.1"/>
    <property type="molecule type" value="Genomic_DNA"/>
</dbReference>
<dbReference type="RefSeq" id="WP_003148724.1">
    <property type="nucleotide sequence ID" value="NC_009656.1"/>
</dbReference>
<dbReference type="SMR" id="A6VCK9"/>
<dbReference type="GeneID" id="77223289"/>
<dbReference type="KEGG" id="pap:PSPA7_5472"/>
<dbReference type="HOGENOM" id="CLU_009422_4_0_6"/>
<dbReference type="Proteomes" id="UP000001582">
    <property type="component" value="Chromosome"/>
</dbReference>
<dbReference type="GO" id="GO:0005737">
    <property type="term" value="C:cytoplasm"/>
    <property type="evidence" value="ECO:0007669"/>
    <property type="project" value="UniProtKB-SubCell"/>
</dbReference>
<dbReference type="GO" id="GO:0008650">
    <property type="term" value="F:rRNA (uridine-2'-O-)-methyltransferase activity"/>
    <property type="evidence" value="ECO:0007669"/>
    <property type="project" value="UniProtKB-UniRule"/>
</dbReference>
<dbReference type="FunFam" id="3.40.50.150:FF:000005">
    <property type="entry name" value="Ribosomal RNA large subunit methyltransferase E"/>
    <property type="match status" value="1"/>
</dbReference>
<dbReference type="Gene3D" id="3.40.50.150">
    <property type="entry name" value="Vaccinia Virus protein VP39"/>
    <property type="match status" value="1"/>
</dbReference>
<dbReference type="HAMAP" id="MF_01547">
    <property type="entry name" value="RNA_methyltr_E"/>
    <property type="match status" value="1"/>
</dbReference>
<dbReference type="InterPro" id="IPR050082">
    <property type="entry name" value="RNA_methyltr_RlmE"/>
</dbReference>
<dbReference type="InterPro" id="IPR002877">
    <property type="entry name" value="RNA_MeTrfase_FtsJ_dom"/>
</dbReference>
<dbReference type="InterPro" id="IPR015507">
    <property type="entry name" value="rRNA-MeTfrase_E"/>
</dbReference>
<dbReference type="InterPro" id="IPR029063">
    <property type="entry name" value="SAM-dependent_MTases_sf"/>
</dbReference>
<dbReference type="NCBIfam" id="NF008390">
    <property type="entry name" value="PRK11188.1"/>
    <property type="match status" value="1"/>
</dbReference>
<dbReference type="PANTHER" id="PTHR10920">
    <property type="entry name" value="RIBOSOMAL RNA METHYLTRANSFERASE"/>
    <property type="match status" value="1"/>
</dbReference>
<dbReference type="PANTHER" id="PTHR10920:SF18">
    <property type="entry name" value="RRNA METHYLTRANSFERASE 2, MITOCHONDRIAL"/>
    <property type="match status" value="1"/>
</dbReference>
<dbReference type="Pfam" id="PF01728">
    <property type="entry name" value="FtsJ"/>
    <property type="match status" value="1"/>
</dbReference>
<dbReference type="PIRSF" id="PIRSF005461">
    <property type="entry name" value="23S_rRNA_mtase"/>
    <property type="match status" value="1"/>
</dbReference>
<dbReference type="SUPFAM" id="SSF53335">
    <property type="entry name" value="S-adenosyl-L-methionine-dependent methyltransferases"/>
    <property type="match status" value="1"/>
</dbReference>
<protein>
    <recommendedName>
        <fullName evidence="1">Ribosomal RNA large subunit methyltransferase E</fullName>
        <ecNumber evidence="1">2.1.1.166</ecNumber>
    </recommendedName>
    <alternativeName>
        <fullName evidence="1">23S rRNA Um2552 methyltransferase</fullName>
    </alternativeName>
    <alternativeName>
        <fullName evidence="1">rRNA (uridine-2'-O-)-methyltransferase</fullName>
    </alternativeName>
</protein>